<accession>P58911</accession>
<dbReference type="EMBL" id="AB063315">
    <property type="protein sequence ID" value="BAC00946.1"/>
    <property type="molecule type" value="mRNA"/>
</dbReference>
<dbReference type="GO" id="GO:0005576">
    <property type="term" value="C:extracellular region"/>
    <property type="evidence" value="ECO:0007669"/>
    <property type="project" value="UniProtKB-SubCell"/>
</dbReference>
<dbReference type="GO" id="GO:0042151">
    <property type="term" value="C:nematocyst"/>
    <property type="evidence" value="ECO:0007669"/>
    <property type="project" value="UniProtKB-SubCell"/>
</dbReference>
<dbReference type="GO" id="GO:0090729">
    <property type="term" value="F:toxin activity"/>
    <property type="evidence" value="ECO:0007669"/>
    <property type="project" value="UniProtKB-KW"/>
</dbReference>
<dbReference type="GO" id="GO:0031640">
    <property type="term" value="P:killing of cells of another organism"/>
    <property type="evidence" value="ECO:0007669"/>
    <property type="project" value="UniProtKB-KW"/>
</dbReference>
<dbReference type="InterPro" id="IPR020864">
    <property type="entry name" value="MACPF"/>
</dbReference>
<dbReference type="Pfam" id="PF01823">
    <property type="entry name" value="MACPF"/>
    <property type="match status" value="1"/>
</dbReference>
<dbReference type="PROSITE" id="PS01186">
    <property type="entry name" value="EGF_2"/>
    <property type="match status" value="1"/>
</dbReference>
<dbReference type="PROSITE" id="PS51412">
    <property type="entry name" value="MACPF_2"/>
    <property type="match status" value="1"/>
</dbReference>
<sequence>MSPYFKLSSALIFLAITMEALCSPIENTSTSNKDNDKETEHIEISAKPSGISRGALGQGFEIHREDLLSKQFEATGEKIFEDLPMDECTVTTTLGTIERDDSFYNSTESLYQSVASSTKISGSLKGAYTLGVSVAAVTNNIASSEEEVQGLSLNLKAYSMSSILKKNCVNTKPLSKDLVSDFEALDSEITKPWKLSSWKKYKVLLEKYGSRIVKESISGSSIYQYVFAKSSQKFNHRSFTVKACVSLAGPTKVGKLSFSGCTGVSQQEIEQSSSQSMIKKLVVRGGKTETRASLIGELDPDQINKFLIEAETDPSPIQYKFEPIWTILKTRYVGTEHFAKAVNLEQFYKGFLHFGCSYLHTTSAENKVAEMQKFDFAKTSDPDAPTYVCKVGPEGCQHHEDCHYRAAFWCECGGPYDLARTCFRHKFKKLKSGLTKKECYPNKESGFAWHGCRLHGLTCWCSAPNRSWEESWSGEDTNNALNDVHQVLMEKKRRDNAQQQY</sequence>
<evidence type="ECO:0000250" key="1"/>
<evidence type="ECO:0000255" key="2"/>
<evidence type="ECO:0000255" key="3">
    <source>
        <dbReference type="PROSITE-ProRule" id="PRU00745"/>
    </source>
</evidence>
<evidence type="ECO:0000269" key="4">
    <source>
    </source>
</evidence>
<evidence type="ECO:0000303" key="5">
    <source>
    </source>
</evidence>
<evidence type="ECO:0000303" key="6">
    <source>
    </source>
</evidence>
<reference key="1">
    <citation type="journal article" date="2002" name="Biochem. Biophys. Res. Commun.">
        <title>Novel proteinaceous toxins from the nematocyst venom of the Okinawan sea anemone Phyllodiscus semoni Kwietniewski.</title>
        <authorList>
            <person name="Nagai H."/>
            <person name="Oshiro N."/>
            <person name="Takuwa-Kuroda K."/>
            <person name="Iwanaga S."/>
            <person name="Nozaki M."/>
            <person name="Nakajima T."/>
        </authorList>
    </citation>
    <scope>NUCLEOTIDE SEQUENCE [MRNA]</scope>
    <scope>PROTEIN SEQUENCE OF 36-61</scope>
    <scope>FUNCTION</scope>
    <source>
        <tissue>Nematoblast</tissue>
    </source>
</reference>
<reference key="2">
    <citation type="journal article" date="2012" name="Toxicon">
        <title>Development of a rational nomenclature for naming peptide and protein toxins from sea anemones.</title>
        <authorList>
            <person name="Oliveira J.S."/>
            <person name="Fuentes-Silva D."/>
            <person name="King G.F."/>
        </authorList>
    </citation>
    <scope>NOMENCLATURE</scope>
</reference>
<comment type="function">
    <text evidence="4">Causes lethal toxicity to the shrimp Palaemon paucidence, and hemolytic activity toward sheep red blood cells.</text>
</comment>
<comment type="subcellular location">
    <subcellularLocation>
        <location>Secreted</location>
    </subcellularLocation>
    <subcellularLocation>
        <location>Nematocyst</location>
    </subcellularLocation>
</comment>
<keyword id="KW-0175">Coiled coil</keyword>
<keyword id="KW-0204">Cytolysis</keyword>
<keyword id="KW-0903">Direct protein sequencing</keyword>
<keyword id="KW-1015">Disulfide bond</keyword>
<keyword id="KW-0245">EGF-like domain</keyword>
<keyword id="KW-0354">Hemolysis</keyword>
<keyword id="KW-0166">Nematocyst</keyword>
<keyword id="KW-0964">Secreted</keyword>
<keyword id="KW-0732">Signal</keyword>
<keyword id="KW-0800">Toxin</keyword>
<organism>
    <name type="scientific">Phyllodiscus semoni</name>
    <name type="common">Night anemone</name>
    <dbReference type="NCBI Taxonomy" id="163701"/>
    <lineage>
        <taxon>Eukaryota</taxon>
        <taxon>Metazoa</taxon>
        <taxon>Cnidaria</taxon>
        <taxon>Anthozoa</taxon>
        <taxon>Hexacorallia</taxon>
        <taxon>Actiniaria</taxon>
        <taxon>Nynantheae</taxon>
        <taxon>Aliciidae</taxon>
        <taxon>Phyllodiscus</taxon>
    </lineage>
</organism>
<proteinExistence type="evidence at protein level"/>
<name>TX60A_PHYSE</name>
<feature type="signal peptide" evidence="2">
    <location>
        <begin position="1"/>
        <end position="22"/>
    </location>
</feature>
<feature type="propeptide" id="PRO_0000034867" evidence="4">
    <location>
        <begin position="23"/>
        <end position="35"/>
    </location>
</feature>
<feature type="chain" id="PRO_0000034868" description="DELTA-alicitoxin-Pse2a">
    <location>
        <begin position="36"/>
        <end position="501"/>
    </location>
</feature>
<feature type="domain" description="MACPF" evidence="3">
    <location>
        <begin position="23"/>
        <end position="359"/>
    </location>
</feature>
<feature type="domain" description="EGF-like">
    <location>
        <begin position="388"/>
        <end position="422"/>
    </location>
</feature>
<feature type="coiled-coil region" evidence="2">
    <location>
        <begin position="135"/>
        <end position="159"/>
    </location>
</feature>
<feature type="disulfide bond" evidence="1">
    <location>
        <begin position="389"/>
        <end position="402"/>
    </location>
</feature>
<feature type="disulfide bond" evidence="1">
    <location>
        <begin position="396"/>
        <end position="410"/>
    </location>
</feature>
<feature type="disulfide bond" evidence="1">
    <location>
        <begin position="412"/>
        <end position="422"/>
    </location>
</feature>
<protein>
    <recommendedName>
        <fullName evidence="6">DELTA-alicitoxin-Pse2a</fullName>
        <shortName evidence="6">DELTA-ALTX-Pse2a</shortName>
    </recommendedName>
    <alternativeName>
        <fullName evidence="5">Toxin PsTX-60A</fullName>
        <shortName evidence="5">PTX60A</shortName>
    </alternativeName>
</protein>